<reference key="1">
    <citation type="submission" date="2007-10" db="EMBL/GenBank/DDBJ databases">
        <title>Genome sequence of Campylobacter concisus 13826 isolated from human feces.</title>
        <authorList>
            <person name="Fouts D.E."/>
            <person name="Mongodin E.F."/>
            <person name="Puiu D."/>
            <person name="Sebastian Y."/>
            <person name="Miller W.G."/>
            <person name="Mandrell R.E."/>
            <person name="On S."/>
            <person name="Nelson K.E."/>
        </authorList>
    </citation>
    <scope>NUCLEOTIDE SEQUENCE [LARGE SCALE GENOMIC DNA]</scope>
    <source>
        <strain>13826</strain>
    </source>
</reference>
<keyword id="KW-0021">Allosteric enzyme</keyword>
<keyword id="KW-0963">Cytoplasm</keyword>
<keyword id="KW-0378">Hydrolase</keyword>
<keyword id="KW-0479">Metal-binding</keyword>
<keyword id="KW-0645">Protease</keyword>
<keyword id="KW-0915">Sodium</keyword>
<keyword id="KW-0888">Threonine protease</keyword>
<name>HSLV_CAMC1</name>
<accession>A7ZDF4</accession>
<feature type="chain" id="PRO_1000012595" description="ATP-dependent protease subunit HslV">
    <location>
        <begin position="1"/>
        <end position="177"/>
    </location>
</feature>
<feature type="active site" evidence="1">
    <location>
        <position position="5"/>
    </location>
</feature>
<feature type="binding site" evidence="1">
    <location>
        <position position="161"/>
    </location>
    <ligand>
        <name>Na(+)</name>
        <dbReference type="ChEBI" id="CHEBI:29101"/>
    </ligand>
</feature>
<feature type="binding site" evidence="1">
    <location>
        <position position="164"/>
    </location>
    <ligand>
        <name>Na(+)</name>
        <dbReference type="ChEBI" id="CHEBI:29101"/>
    </ligand>
</feature>
<feature type="binding site" evidence="1">
    <location>
        <position position="167"/>
    </location>
    <ligand>
        <name>Na(+)</name>
        <dbReference type="ChEBI" id="CHEBI:29101"/>
    </ligand>
</feature>
<proteinExistence type="inferred from homology"/>
<organism>
    <name type="scientific">Campylobacter concisus (strain 13826)</name>
    <dbReference type="NCBI Taxonomy" id="360104"/>
    <lineage>
        <taxon>Bacteria</taxon>
        <taxon>Pseudomonadati</taxon>
        <taxon>Campylobacterota</taxon>
        <taxon>Epsilonproteobacteria</taxon>
        <taxon>Campylobacterales</taxon>
        <taxon>Campylobacteraceae</taxon>
        <taxon>Campylobacter</taxon>
    </lineage>
</organism>
<gene>
    <name evidence="1" type="primary">hslV</name>
    <name type="ordered locus">Ccon26_09440</name>
    <name type="ORF">CCC13826_1221</name>
</gene>
<dbReference type="EC" id="3.4.25.2" evidence="1"/>
<dbReference type="EMBL" id="CP000792">
    <property type="protein sequence ID" value="EAT98648.1"/>
    <property type="molecule type" value="Genomic_DNA"/>
</dbReference>
<dbReference type="RefSeq" id="WP_002940451.1">
    <property type="nucleotide sequence ID" value="NC_009802.2"/>
</dbReference>
<dbReference type="SMR" id="A7ZDF4"/>
<dbReference type="STRING" id="360104.CCC13826_1221"/>
<dbReference type="KEGG" id="cco:CCC13826_1221"/>
<dbReference type="eggNOG" id="COG5405">
    <property type="taxonomic scope" value="Bacteria"/>
</dbReference>
<dbReference type="HOGENOM" id="CLU_093872_1_1_7"/>
<dbReference type="OrthoDB" id="9804884at2"/>
<dbReference type="Proteomes" id="UP000001121">
    <property type="component" value="Chromosome"/>
</dbReference>
<dbReference type="GO" id="GO:0009376">
    <property type="term" value="C:HslUV protease complex"/>
    <property type="evidence" value="ECO:0007669"/>
    <property type="project" value="UniProtKB-UniRule"/>
</dbReference>
<dbReference type="GO" id="GO:0005839">
    <property type="term" value="C:proteasome core complex"/>
    <property type="evidence" value="ECO:0007669"/>
    <property type="project" value="InterPro"/>
</dbReference>
<dbReference type="GO" id="GO:0046872">
    <property type="term" value="F:metal ion binding"/>
    <property type="evidence" value="ECO:0007669"/>
    <property type="project" value="UniProtKB-KW"/>
</dbReference>
<dbReference type="GO" id="GO:0004298">
    <property type="term" value="F:threonine-type endopeptidase activity"/>
    <property type="evidence" value="ECO:0007669"/>
    <property type="project" value="UniProtKB-KW"/>
</dbReference>
<dbReference type="GO" id="GO:0051603">
    <property type="term" value="P:proteolysis involved in protein catabolic process"/>
    <property type="evidence" value="ECO:0007669"/>
    <property type="project" value="InterPro"/>
</dbReference>
<dbReference type="CDD" id="cd01913">
    <property type="entry name" value="protease_HslV"/>
    <property type="match status" value="1"/>
</dbReference>
<dbReference type="Gene3D" id="3.60.20.10">
    <property type="entry name" value="Glutamine Phosphoribosylpyrophosphate, subunit 1, domain 1"/>
    <property type="match status" value="1"/>
</dbReference>
<dbReference type="HAMAP" id="MF_00248">
    <property type="entry name" value="HslV"/>
    <property type="match status" value="1"/>
</dbReference>
<dbReference type="InterPro" id="IPR022281">
    <property type="entry name" value="ATP-dep_Prtase_HsIV_su"/>
</dbReference>
<dbReference type="InterPro" id="IPR029055">
    <property type="entry name" value="Ntn_hydrolases_N"/>
</dbReference>
<dbReference type="InterPro" id="IPR001353">
    <property type="entry name" value="Proteasome_sua/b"/>
</dbReference>
<dbReference type="InterPro" id="IPR023333">
    <property type="entry name" value="Proteasome_suB-type"/>
</dbReference>
<dbReference type="NCBIfam" id="TIGR03692">
    <property type="entry name" value="ATP_dep_HslV"/>
    <property type="match status" value="1"/>
</dbReference>
<dbReference type="NCBIfam" id="NF003964">
    <property type="entry name" value="PRK05456.1"/>
    <property type="match status" value="1"/>
</dbReference>
<dbReference type="PANTHER" id="PTHR32194:SF0">
    <property type="entry name" value="ATP-DEPENDENT PROTEASE SUBUNIT HSLV"/>
    <property type="match status" value="1"/>
</dbReference>
<dbReference type="PANTHER" id="PTHR32194">
    <property type="entry name" value="METALLOPROTEASE TLDD"/>
    <property type="match status" value="1"/>
</dbReference>
<dbReference type="Pfam" id="PF00227">
    <property type="entry name" value="Proteasome"/>
    <property type="match status" value="1"/>
</dbReference>
<dbReference type="PIRSF" id="PIRSF039093">
    <property type="entry name" value="HslV"/>
    <property type="match status" value="1"/>
</dbReference>
<dbReference type="SUPFAM" id="SSF56235">
    <property type="entry name" value="N-terminal nucleophile aminohydrolases (Ntn hydrolases)"/>
    <property type="match status" value="1"/>
</dbReference>
<dbReference type="PROSITE" id="PS51476">
    <property type="entry name" value="PROTEASOME_BETA_2"/>
    <property type="match status" value="1"/>
</dbReference>
<comment type="function">
    <text evidence="1">Protease subunit of a proteasome-like degradation complex believed to be a general protein degrading machinery.</text>
</comment>
<comment type="catalytic activity">
    <reaction evidence="1">
        <text>ATP-dependent cleavage of peptide bonds with broad specificity.</text>
        <dbReference type="EC" id="3.4.25.2"/>
    </reaction>
</comment>
<comment type="activity regulation">
    <text evidence="1">Allosterically activated by HslU binding.</text>
</comment>
<comment type="subunit">
    <text evidence="1">A double ring-shaped homohexamer of HslV is capped on each side by a ring-shaped HslU homohexamer. The assembly of the HslU/HslV complex is dependent on binding of ATP.</text>
</comment>
<comment type="subcellular location">
    <subcellularLocation>
        <location evidence="1">Cytoplasm</location>
    </subcellularLocation>
</comment>
<comment type="similarity">
    <text evidence="1">Belongs to the peptidase T1B family. HslV subfamily.</text>
</comment>
<evidence type="ECO:0000255" key="1">
    <source>
        <dbReference type="HAMAP-Rule" id="MF_00248"/>
    </source>
</evidence>
<sequence>MFHATTILAYKGKNKAVIGGDGQVSFGNTVLKGNAVKIRKIHNGKVLAGFAGSTADAFNLFDMFEKNLEHTKGDLLKAVIEFSKEWRKDKYLRKLEAMMLVLDRDKIFLLSGTGDVVEPEDGKIAAIGSGGNYALSAARALDKFADIDEEELVKESLKIAGEICIYTNTNIKTYVLE</sequence>
<protein>
    <recommendedName>
        <fullName evidence="1">ATP-dependent protease subunit HslV</fullName>
        <ecNumber evidence="1">3.4.25.2</ecNumber>
    </recommendedName>
</protein>